<dbReference type="EC" id="1.4.1.4" evidence="3"/>
<dbReference type="EMBL" id="AJ010746">
    <property type="protein sequence ID" value="CAB54142.1"/>
    <property type="molecule type" value="Genomic_DNA"/>
</dbReference>
<dbReference type="SMR" id="Q9S1F9"/>
<dbReference type="GO" id="GO:0005737">
    <property type="term" value="C:cytoplasm"/>
    <property type="evidence" value="ECO:0000250"/>
    <property type="project" value="UniProtKB"/>
</dbReference>
<dbReference type="GO" id="GO:0005829">
    <property type="term" value="C:cytosol"/>
    <property type="evidence" value="ECO:0007669"/>
    <property type="project" value="TreeGrafter"/>
</dbReference>
<dbReference type="GO" id="GO:0004354">
    <property type="term" value="F:glutamate dehydrogenase (NADP+) activity"/>
    <property type="evidence" value="ECO:0000315"/>
    <property type="project" value="UniProtKB"/>
</dbReference>
<dbReference type="GO" id="GO:0006537">
    <property type="term" value="P:glutamate biosynthetic process"/>
    <property type="evidence" value="ECO:0000315"/>
    <property type="project" value="UniProtKB"/>
</dbReference>
<dbReference type="FunFam" id="1.10.285.10:FF:000001">
    <property type="entry name" value="Glutamate dehydrogenase"/>
    <property type="match status" value="1"/>
</dbReference>
<dbReference type="FunFam" id="3.40.50.10860:FF:000002">
    <property type="entry name" value="Glutamate dehydrogenase"/>
    <property type="match status" value="1"/>
</dbReference>
<dbReference type="FunFam" id="3.40.50.720:FF:000030">
    <property type="entry name" value="Glutamate dehydrogenase"/>
    <property type="match status" value="1"/>
</dbReference>
<dbReference type="Gene3D" id="1.10.285.10">
    <property type="entry name" value="Glutamate Dehydrogenase, chain A, domain 3"/>
    <property type="match status" value="2"/>
</dbReference>
<dbReference type="Gene3D" id="3.40.50.10860">
    <property type="entry name" value="Leucine Dehydrogenase, chain A, domain 1"/>
    <property type="match status" value="1"/>
</dbReference>
<dbReference type="Gene3D" id="3.40.50.720">
    <property type="entry name" value="NAD(P)-binding Rossmann-like Domain"/>
    <property type="match status" value="1"/>
</dbReference>
<dbReference type="InterPro" id="IPR046346">
    <property type="entry name" value="Aminoacid_DH-like_N_sf"/>
</dbReference>
<dbReference type="InterPro" id="IPR006095">
    <property type="entry name" value="Glu/Leu/Phe/Val/Trp_DH"/>
</dbReference>
<dbReference type="InterPro" id="IPR006096">
    <property type="entry name" value="Glu/Leu/Phe/Val/Trp_DH_C"/>
</dbReference>
<dbReference type="InterPro" id="IPR006097">
    <property type="entry name" value="Glu/Leu/Phe/Val/Trp_DH_dimer"/>
</dbReference>
<dbReference type="InterPro" id="IPR033524">
    <property type="entry name" value="Glu/Leu/Phe/Val_DH_AS"/>
</dbReference>
<dbReference type="InterPro" id="IPR014362">
    <property type="entry name" value="Glu_DH"/>
</dbReference>
<dbReference type="InterPro" id="IPR050724">
    <property type="entry name" value="Glu_Leu_Phe_Val_DH"/>
</dbReference>
<dbReference type="InterPro" id="IPR036291">
    <property type="entry name" value="NAD(P)-bd_dom_sf"/>
</dbReference>
<dbReference type="NCBIfam" id="NF006929">
    <property type="entry name" value="PRK09414.1"/>
    <property type="match status" value="1"/>
</dbReference>
<dbReference type="PANTHER" id="PTHR43571">
    <property type="entry name" value="NADP-SPECIFIC GLUTAMATE DEHYDROGENASE 1-RELATED"/>
    <property type="match status" value="1"/>
</dbReference>
<dbReference type="PANTHER" id="PTHR43571:SF1">
    <property type="entry name" value="NADP-SPECIFIC GLUTAMATE DEHYDROGENASE 1-RELATED"/>
    <property type="match status" value="1"/>
</dbReference>
<dbReference type="Pfam" id="PF00208">
    <property type="entry name" value="ELFV_dehydrog"/>
    <property type="match status" value="1"/>
</dbReference>
<dbReference type="Pfam" id="PF02812">
    <property type="entry name" value="ELFV_dehydrog_N"/>
    <property type="match status" value="1"/>
</dbReference>
<dbReference type="PIRSF" id="PIRSF000185">
    <property type="entry name" value="Glu_DH"/>
    <property type="match status" value="1"/>
</dbReference>
<dbReference type="PRINTS" id="PR00082">
    <property type="entry name" value="GLFDHDRGNASE"/>
</dbReference>
<dbReference type="SMART" id="SM00839">
    <property type="entry name" value="ELFV_dehydrog"/>
    <property type="match status" value="1"/>
</dbReference>
<dbReference type="SUPFAM" id="SSF53223">
    <property type="entry name" value="Aminoacid dehydrogenase-like, N-terminal domain"/>
    <property type="match status" value="1"/>
</dbReference>
<dbReference type="SUPFAM" id="SSF51735">
    <property type="entry name" value="NAD(P)-binding Rossmann-fold domains"/>
    <property type="match status" value="1"/>
</dbReference>
<dbReference type="PROSITE" id="PS00074">
    <property type="entry name" value="GLFV_DEHYDROGENASE"/>
    <property type="match status" value="1"/>
</dbReference>
<keyword id="KW-0903">Direct protein sequencing</keyword>
<keyword id="KW-0521">NADP</keyword>
<keyword id="KW-0560">Oxidoreductase</keyword>
<evidence type="ECO:0000250" key="1"/>
<evidence type="ECO:0000255" key="2">
    <source>
        <dbReference type="PROSITE-ProRule" id="PRU10011"/>
    </source>
</evidence>
<evidence type="ECO:0000269" key="3">
    <source>
    </source>
</evidence>
<evidence type="ECO:0000303" key="4">
    <source>
    </source>
</evidence>
<evidence type="ECO:0000305" key="5"/>
<feature type="initiator methionine" description="Removed" evidence="3">
    <location>
        <position position="1"/>
    </location>
</feature>
<feature type="chain" id="PRO_0000182774" description="NADP-specific glutamate dehydrogenase">
    <location>
        <begin position="2"/>
        <end position="448"/>
    </location>
</feature>
<feature type="active site" description="Proton donor" evidence="2">
    <location>
        <position position="124"/>
    </location>
</feature>
<feature type="binding site" evidence="1">
    <location>
        <position position="88"/>
    </location>
    <ligand>
        <name>substrate</name>
    </ligand>
</feature>
<feature type="binding site" evidence="1">
    <location>
        <position position="109"/>
    </location>
    <ligand>
        <name>substrate</name>
    </ligand>
</feature>
<feature type="binding site" evidence="1">
    <location>
        <position position="112"/>
    </location>
    <ligand>
        <name>substrate</name>
    </ligand>
</feature>
<feature type="binding site" evidence="1">
    <location>
        <position position="163"/>
    </location>
    <ligand>
        <name>substrate</name>
    </ligand>
</feature>
<feature type="binding site" evidence="1">
    <location>
        <position position="207"/>
    </location>
    <ligand>
        <name>NADP(+)</name>
        <dbReference type="ChEBI" id="CHEBI:58349"/>
    </ligand>
</feature>
<feature type="binding site" evidence="1">
    <location>
        <position position="238"/>
    </location>
    <ligand>
        <name>NADP(+)</name>
        <dbReference type="ChEBI" id="CHEBI:58349"/>
    </ligand>
</feature>
<feature type="binding site" evidence="1">
    <location>
        <position position="375"/>
    </location>
    <ligand>
        <name>substrate</name>
    </ligand>
</feature>
<feature type="site" description="Important for catalysis" evidence="1">
    <location>
        <position position="164"/>
    </location>
</feature>
<sequence>MSISKAIEKVEARYAHQPEFIQAVKEVAITIKPLYDAHPEYDKLKVFERLVEPDRVFGFRVNWEDDNGEIQINRGWRVQFSNALGPYKGGLRFHPTVNQSVLKFLGFEQIFKNALTGLPIGGGKGGSDFDPKGKTDSEIRRFCYAFMRELHHYVNKDMDVPAGDIGVGGREVSYMFAMYKNLTRESTGVITGKGVGFGGSLMRTEATGYGAVYFLQNMLAAQNESIEGKKVLVSGAGNVSLHAAEKATLIGAIVLTVSDSKGTIYDAKGLNQEKIDWLKVQKDQHKPLADYVEVFGGEWMADQKPWSIKADIAIPSATQNEINEEDAKLLVDNGVKYIVEGANMPLTAEAIDYIRLHRVHYAPGKAANAGGVAVSALEMSQNSVRQYQTFEQVDERLQGIMKDIHDSSAQASEMYGQTDEGYIDYMSGANMVGFKRVADALVAFGILN</sequence>
<proteinExistence type="evidence at protein level"/>
<reference key="1">
    <citation type="journal article" date="2000" name="Eur. J. Biochem.">
        <title>NADP+-dependent glutamate dehydrogenase in the Antarctic psychrotolerant bacterium Psychrobacter sp. TAD1. Characterization, protein and DNA sequence, and relationship to other glutamate dehydrogenases.</title>
        <authorList>
            <person name="Di Fraia R."/>
            <person name="Wilquet V."/>
            <person name="Ciardiello M.A."/>
            <person name="Carratore V."/>
            <person name="Antignani A."/>
            <person name="Camardella L."/>
            <person name="Glansdorff N."/>
            <person name="Di Prisco G."/>
        </authorList>
    </citation>
    <scope>NUCLEOTIDE SEQUENCE [GENOMIC DNA]</scope>
    <scope>PROTEIN SEQUENCE OF 2-448</scope>
    <scope>FUNCTION AS A GLUTAMATE DEHYDROGENASE</scope>
    <scope>CATALYTIC ACTIVITY</scope>
    <scope>SUBUNIT</scope>
    <scope>BIOPHYSICOCHEMICAL PROPERTIES</scope>
    <source>
        <strain>TAD1</strain>
    </source>
</reference>
<gene>
    <name type="primary">gdhA</name>
    <name evidence="4" type="synonym">gdh</name>
</gene>
<protein>
    <recommendedName>
        <fullName>NADP-specific glutamate dehydrogenase</fullName>
        <shortName>NADP-GDH</shortName>
        <ecNumber evidence="3">1.4.1.4</ecNumber>
    </recommendedName>
</protein>
<comment type="function">
    <text evidence="3">Catalyzes the reversible oxidative deamination of glutamate to alpha-ketoglutarate and ammonia.</text>
</comment>
<comment type="catalytic activity">
    <reaction evidence="3">
        <text>L-glutamate + NADP(+) + H2O = 2-oxoglutarate + NH4(+) + NADPH + H(+)</text>
        <dbReference type="Rhea" id="RHEA:11612"/>
        <dbReference type="ChEBI" id="CHEBI:15377"/>
        <dbReference type="ChEBI" id="CHEBI:15378"/>
        <dbReference type="ChEBI" id="CHEBI:16810"/>
        <dbReference type="ChEBI" id="CHEBI:28938"/>
        <dbReference type="ChEBI" id="CHEBI:29985"/>
        <dbReference type="ChEBI" id="CHEBI:57783"/>
        <dbReference type="ChEBI" id="CHEBI:58349"/>
        <dbReference type="EC" id="1.4.1.4"/>
    </reaction>
</comment>
<comment type="biophysicochemical properties">
    <kinetics>
        <KM evidence="3">0.043 mM for NADP (at 20 degrees Celsius and at pH 8)</KM>
        <KM evidence="3">4 mM for ammonium (at 20 degrees Celsius and at pH 8)</KM>
        <KM evidence="3">67.4 mM for L-glutamate (at 20 degrees Celsius and at pH 8)</KM>
    </kinetics>
    <phDependence>
        <text evidence="3">Optimum pH is 8.</text>
    </phDependence>
    <temperatureDependence>
        <text evidence="3">Optimum temperature is 25 degrees Celsius.</text>
    </temperatureDependence>
</comment>
<comment type="subunit">
    <text evidence="3">Homohexamer.</text>
</comment>
<comment type="similarity">
    <text evidence="5">Belongs to the Glu/Leu/Phe/Val dehydrogenases family.</text>
</comment>
<accession>Q9S1F9</accession>
<name>DHE4_PSYT1</name>
<organism>
    <name type="scientific">Psychrobacter sp. (strain TAD1)</name>
    <dbReference type="NCBI Taxonomy" id="81861"/>
    <lineage>
        <taxon>Bacteria</taxon>
        <taxon>Pseudomonadati</taxon>
        <taxon>Pseudomonadota</taxon>
        <taxon>Gammaproteobacteria</taxon>
        <taxon>Moraxellales</taxon>
        <taxon>Moraxellaceae</taxon>
        <taxon>Psychrobacter</taxon>
    </lineage>
</organism>